<gene>
    <name evidence="1" type="primary">ndhD</name>
    <name type="ordered locus">Syncc9902_0292</name>
</gene>
<evidence type="ECO:0000255" key="1">
    <source>
        <dbReference type="HAMAP-Rule" id="MF_00491"/>
    </source>
</evidence>
<protein>
    <recommendedName>
        <fullName evidence="1">NAD(P)H-quinone oxidoreductase chain 4</fullName>
        <ecNumber evidence="1">7.1.1.-</ecNumber>
    </recommendedName>
    <alternativeName>
        <fullName evidence="1">NAD(P)H dehydrogenase I, chain 4</fullName>
    </alternativeName>
    <alternativeName>
        <fullName evidence="1">NDH-1, chain 4</fullName>
    </alternativeName>
</protein>
<feature type="chain" id="PRO_0000343254" description="NAD(P)H-quinone oxidoreductase chain 4">
    <location>
        <begin position="1"/>
        <end position="548"/>
    </location>
</feature>
<feature type="transmembrane region" description="Helical" evidence="1">
    <location>
        <begin position="17"/>
        <end position="37"/>
    </location>
</feature>
<feature type="transmembrane region" description="Helical" evidence="1">
    <location>
        <begin position="48"/>
        <end position="68"/>
    </location>
</feature>
<feature type="transmembrane region" description="Helical" evidence="1">
    <location>
        <begin position="103"/>
        <end position="123"/>
    </location>
</feature>
<feature type="transmembrane region" description="Helical" evidence="1">
    <location>
        <begin position="127"/>
        <end position="147"/>
    </location>
</feature>
<feature type="transmembrane region" description="Helical" evidence="1">
    <location>
        <begin position="149"/>
        <end position="169"/>
    </location>
</feature>
<feature type="transmembrane region" description="Helical" evidence="1">
    <location>
        <begin position="181"/>
        <end position="201"/>
    </location>
</feature>
<feature type="transmembrane region" description="Helical" evidence="1">
    <location>
        <begin position="222"/>
        <end position="242"/>
    </location>
</feature>
<feature type="transmembrane region" description="Helical" evidence="1">
    <location>
        <begin position="256"/>
        <end position="276"/>
    </location>
</feature>
<feature type="transmembrane region" description="Helical" evidence="1">
    <location>
        <begin position="290"/>
        <end position="310"/>
    </location>
</feature>
<feature type="transmembrane region" description="Helical" evidence="1">
    <location>
        <begin position="327"/>
        <end position="347"/>
    </location>
</feature>
<feature type="transmembrane region" description="Helical" evidence="1">
    <location>
        <begin position="348"/>
        <end position="368"/>
    </location>
</feature>
<feature type="transmembrane region" description="Helical" evidence="1">
    <location>
        <begin position="389"/>
        <end position="409"/>
    </location>
</feature>
<feature type="transmembrane region" description="Helical" evidence="1">
    <location>
        <begin position="430"/>
        <end position="450"/>
    </location>
</feature>
<feature type="transmembrane region" description="Helical" evidence="1">
    <location>
        <begin position="477"/>
        <end position="497"/>
    </location>
</feature>
<name>NU4C_SYNS9</name>
<sequence>MIEFAVAGLSDPVQATVPWLSLSILVPIGGALLIPFIPDQGEGKQIRWYALIVTLITFLITVAAYLTGYDPSLSGLQLFERVSWLPEIGLTWTVGADGLSMPLILLTSFITSLACLAAWPVTFKPRLFFFLLLAMDGGQIAVFAVQDMLLFFLAWELELLPVYLLLAIWGGKKRQYAATKFILYTAGSSLFILLAALAMGFFGGGTPSFEYTALAAKDFGSGFQLLCYAGLLIAFGVKLPIVPLHTWLPDAHGEATAPVHMLLAGILLKMGGYALLRFNCELLPAAHAQFAPLLIVLGVVNIIYAALTSFAQRNLKRKIAYSSISHMGFVLIGIGSFSVLGSSGAMLQMISHGLIGASLFFLVGATYDRTHTLLLDEMGGIGQKMRIMFALWTVCALASLALPGMSGFVSELMIFAGFATDEAYTLPFRVVICGLAAVGVVLTPVYLLSMLREIFFGKEKAELASHTNLVDAEPREVYIIGCLLVPIIGIGLYPRLMTDSFSSSIEALVSRDVTAMEQLTKPTAPLIRGQSTVPAILRAPNLGTPTPK</sequence>
<organism>
    <name type="scientific">Synechococcus sp. (strain CC9902)</name>
    <dbReference type="NCBI Taxonomy" id="316279"/>
    <lineage>
        <taxon>Bacteria</taxon>
        <taxon>Bacillati</taxon>
        <taxon>Cyanobacteriota</taxon>
        <taxon>Cyanophyceae</taxon>
        <taxon>Synechococcales</taxon>
        <taxon>Synechococcaceae</taxon>
        <taxon>Synechococcus</taxon>
    </lineage>
</organism>
<reference key="1">
    <citation type="submission" date="2005-08" db="EMBL/GenBank/DDBJ databases">
        <title>Complete sequence of Synechococcus sp. CC9902.</title>
        <authorList>
            <person name="Copeland A."/>
            <person name="Lucas S."/>
            <person name="Lapidus A."/>
            <person name="Barry K."/>
            <person name="Detter J.C."/>
            <person name="Glavina T."/>
            <person name="Hammon N."/>
            <person name="Israni S."/>
            <person name="Pitluck S."/>
            <person name="Martinez M."/>
            <person name="Schmutz J."/>
            <person name="Larimer F."/>
            <person name="Land M."/>
            <person name="Kyrpides N."/>
            <person name="Ivanova N."/>
            <person name="Richardson P."/>
        </authorList>
    </citation>
    <scope>NUCLEOTIDE SEQUENCE [LARGE SCALE GENOMIC DNA]</scope>
    <source>
        <strain>CC9902</strain>
    </source>
</reference>
<comment type="function">
    <text evidence="1">NDH-1 shuttles electrons from NAD(P)H, via FMN and iron-sulfur (Fe-S) centers, to quinones in the respiratory chain. The immediate electron acceptor for the enzyme in this species is believed to be plastoquinone. Couples the redox reaction to proton translocation (for every two electrons transferred, four hydrogen ions are translocated across the cytoplasmic membrane), and thus conserves the redox energy in a proton gradient.</text>
</comment>
<comment type="catalytic activity">
    <reaction evidence="1">
        <text>a plastoquinone + NADH + (n+1) H(+)(in) = a plastoquinol + NAD(+) + n H(+)(out)</text>
        <dbReference type="Rhea" id="RHEA:42608"/>
        <dbReference type="Rhea" id="RHEA-COMP:9561"/>
        <dbReference type="Rhea" id="RHEA-COMP:9562"/>
        <dbReference type="ChEBI" id="CHEBI:15378"/>
        <dbReference type="ChEBI" id="CHEBI:17757"/>
        <dbReference type="ChEBI" id="CHEBI:57540"/>
        <dbReference type="ChEBI" id="CHEBI:57945"/>
        <dbReference type="ChEBI" id="CHEBI:62192"/>
    </reaction>
</comment>
<comment type="catalytic activity">
    <reaction evidence="1">
        <text>a plastoquinone + NADPH + (n+1) H(+)(in) = a plastoquinol + NADP(+) + n H(+)(out)</text>
        <dbReference type="Rhea" id="RHEA:42612"/>
        <dbReference type="Rhea" id="RHEA-COMP:9561"/>
        <dbReference type="Rhea" id="RHEA-COMP:9562"/>
        <dbReference type="ChEBI" id="CHEBI:15378"/>
        <dbReference type="ChEBI" id="CHEBI:17757"/>
        <dbReference type="ChEBI" id="CHEBI:57783"/>
        <dbReference type="ChEBI" id="CHEBI:58349"/>
        <dbReference type="ChEBI" id="CHEBI:62192"/>
    </reaction>
</comment>
<comment type="subcellular location">
    <subcellularLocation>
        <location evidence="1">Cellular thylakoid membrane</location>
        <topology evidence="1">Multi-pass membrane protein</topology>
    </subcellularLocation>
</comment>
<comment type="similarity">
    <text evidence="1">Belongs to the complex I subunit 4 family.</text>
</comment>
<proteinExistence type="inferred from homology"/>
<keyword id="KW-0472">Membrane</keyword>
<keyword id="KW-0520">NAD</keyword>
<keyword id="KW-0521">NADP</keyword>
<keyword id="KW-0618">Plastoquinone</keyword>
<keyword id="KW-0874">Quinone</keyword>
<keyword id="KW-1185">Reference proteome</keyword>
<keyword id="KW-0793">Thylakoid</keyword>
<keyword id="KW-1278">Translocase</keyword>
<keyword id="KW-0812">Transmembrane</keyword>
<keyword id="KW-1133">Transmembrane helix</keyword>
<dbReference type="EC" id="7.1.1.-" evidence="1"/>
<dbReference type="EMBL" id="CP000097">
    <property type="protein sequence ID" value="ABB25265.1"/>
    <property type="molecule type" value="Genomic_DNA"/>
</dbReference>
<dbReference type="RefSeq" id="WP_011359123.1">
    <property type="nucleotide sequence ID" value="NC_007513.1"/>
</dbReference>
<dbReference type="SMR" id="Q3B063"/>
<dbReference type="STRING" id="316279.Syncc9902_0292"/>
<dbReference type="KEGG" id="sye:Syncc9902_0292"/>
<dbReference type="eggNOG" id="COG1008">
    <property type="taxonomic scope" value="Bacteria"/>
</dbReference>
<dbReference type="HOGENOM" id="CLU_007100_4_0_3"/>
<dbReference type="OrthoDB" id="9811718at2"/>
<dbReference type="Proteomes" id="UP000002712">
    <property type="component" value="Chromosome"/>
</dbReference>
<dbReference type="GO" id="GO:0031676">
    <property type="term" value="C:plasma membrane-derived thylakoid membrane"/>
    <property type="evidence" value="ECO:0007669"/>
    <property type="project" value="UniProtKB-SubCell"/>
</dbReference>
<dbReference type="GO" id="GO:0008137">
    <property type="term" value="F:NADH dehydrogenase (ubiquinone) activity"/>
    <property type="evidence" value="ECO:0007669"/>
    <property type="project" value="InterPro"/>
</dbReference>
<dbReference type="GO" id="GO:0048039">
    <property type="term" value="F:ubiquinone binding"/>
    <property type="evidence" value="ECO:0007669"/>
    <property type="project" value="TreeGrafter"/>
</dbReference>
<dbReference type="GO" id="GO:0042773">
    <property type="term" value="P:ATP synthesis coupled electron transport"/>
    <property type="evidence" value="ECO:0007669"/>
    <property type="project" value="InterPro"/>
</dbReference>
<dbReference type="GO" id="GO:0015990">
    <property type="term" value="P:electron transport coupled proton transport"/>
    <property type="evidence" value="ECO:0007669"/>
    <property type="project" value="TreeGrafter"/>
</dbReference>
<dbReference type="HAMAP" id="MF_00491">
    <property type="entry name" value="NDH1_NuoM"/>
    <property type="match status" value="1"/>
</dbReference>
<dbReference type="InterPro" id="IPR022997">
    <property type="entry name" value="NADH_Q_OxRdtase_chain4"/>
</dbReference>
<dbReference type="InterPro" id="IPR010227">
    <property type="entry name" value="NADH_Q_OxRdtase_chainM/4"/>
</dbReference>
<dbReference type="InterPro" id="IPR003918">
    <property type="entry name" value="NADH_UbQ_OxRdtase"/>
</dbReference>
<dbReference type="InterPro" id="IPR001750">
    <property type="entry name" value="ND/Mrp_TM"/>
</dbReference>
<dbReference type="NCBIfam" id="TIGR01972">
    <property type="entry name" value="NDH_I_M"/>
    <property type="match status" value="1"/>
</dbReference>
<dbReference type="NCBIfam" id="NF002713">
    <property type="entry name" value="PRK02546.1"/>
    <property type="match status" value="1"/>
</dbReference>
<dbReference type="NCBIfam" id="NF009212">
    <property type="entry name" value="PRK12561.1"/>
    <property type="match status" value="1"/>
</dbReference>
<dbReference type="PANTHER" id="PTHR43507:SF21">
    <property type="entry name" value="NAD(P)H-QUINONE OXIDOREDUCTASE CHAIN 4, CHLOROPLASTIC"/>
    <property type="match status" value="1"/>
</dbReference>
<dbReference type="PANTHER" id="PTHR43507">
    <property type="entry name" value="NADH-UBIQUINONE OXIDOREDUCTASE CHAIN 4"/>
    <property type="match status" value="1"/>
</dbReference>
<dbReference type="Pfam" id="PF00361">
    <property type="entry name" value="Proton_antipo_M"/>
    <property type="match status" value="1"/>
</dbReference>
<dbReference type="PRINTS" id="PR01437">
    <property type="entry name" value="NUOXDRDTASE4"/>
</dbReference>
<accession>Q3B063</accession>